<gene>
    <name evidence="1" type="primary">recA</name>
    <name type="ordered locus">Shew_1215</name>
</gene>
<sequence>MKIDANKEKALSAVLGQIEKQFGKGSIMKLGENRSMDVETISTGSLSLDVALGAGGLPLGRIVEIYGPESSGKTTLTLEVIAAAQREGKVCAFIDAEHALDPIYAQKLGVDIDNLLCSQPDTGEQALEICDALTRSGAVDVIIVDSVAALTPKAEIEGEIGDSHMGLAARMMSQAMRKLAGNLKQSNTLLIFINQIRMKIGVMFGNPETTTGGNALKFYASVRLDIRRTGAIKDREEVIGNETRVKVVKNKIAAPFKQAEFQILYGEGINRTGELVDLGVMHKLIEKSGAWYSYKGDKIGQGRANAGKYLVENPEIGAEIDQALRAMLLGGGQAVAQSATGDENVDLETGEVF</sequence>
<reference key="1">
    <citation type="submission" date="2007-03" db="EMBL/GenBank/DDBJ databases">
        <title>Complete sequence of Shewanella loihica PV-4.</title>
        <authorList>
            <consortium name="US DOE Joint Genome Institute"/>
            <person name="Copeland A."/>
            <person name="Lucas S."/>
            <person name="Lapidus A."/>
            <person name="Barry K."/>
            <person name="Detter J.C."/>
            <person name="Glavina del Rio T."/>
            <person name="Hammon N."/>
            <person name="Israni S."/>
            <person name="Dalin E."/>
            <person name="Tice H."/>
            <person name="Pitluck S."/>
            <person name="Chain P."/>
            <person name="Malfatti S."/>
            <person name="Shin M."/>
            <person name="Vergez L."/>
            <person name="Schmutz J."/>
            <person name="Larimer F."/>
            <person name="Land M."/>
            <person name="Hauser L."/>
            <person name="Kyrpides N."/>
            <person name="Mikhailova N."/>
            <person name="Romine M.F."/>
            <person name="Serres G."/>
            <person name="Fredrickson J."/>
            <person name="Tiedje J."/>
            <person name="Richardson P."/>
        </authorList>
    </citation>
    <scope>NUCLEOTIDE SEQUENCE [LARGE SCALE GENOMIC DNA]</scope>
    <source>
        <strain>ATCC BAA-1088 / PV-4</strain>
    </source>
</reference>
<protein>
    <recommendedName>
        <fullName evidence="1">Protein RecA</fullName>
    </recommendedName>
    <alternativeName>
        <fullName evidence="1">Recombinase A</fullName>
    </alternativeName>
</protein>
<proteinExistence type="inferred from homology"/>
<name>RECA_SHELP</name>
<organism>
    <name type="scientific">Shewanella loihica (strain ATCC BAA-1088 / PV-4)</name>
    <dbReference type="NCBI Taxonomy" id="323850"/>
    <lineage>
        <taxon>Bacteria</taxon>
        <taxon>Pseudomonadati</taxon>
        <taxon>Pseudomonadota</taxon>
        <taxon>Gammaproteobacteria</taxon>
        <taxon>Alteromonadales</taxon>
        <taxon>Shewanellaceae</taxon>
        <taxon>Shewanella</taxon>
    </lineage>
</organism>
<accession>A3QC87</accession>
<feature type="chain" id="PRO_1000047995" description="Protein RecA">
    <location>
        <begin position="1"/>
        <end position="353"/>
    </location>
</feature>
<feature type="binding site" evidence="1">
    <location>
        <begin position="67"/>
        <end position="74"/>
    </location>
    <ligand>
        <name>ATP</name>
        <dbReference type="ChEBI" id="CHEBI:30616"/>
    </ligand>
</feature>
<dbReference type="EMBL" id="CP000606">
    <property type="protein sequence ID" value="ABO23085.1"/>
    <property type="molecule type" value="Genomic_DNA"/>
</dbReference>
<dbReference type="RefSeq" id="WP_011865017.1">
    <property type="nucleotide sequence ID" value="NC_009092.1"/>
</dbReference>
<dbReference type="SMR" id="A3QC87"/>
<dbReference type="STRING" id="323850.Shew_1215"/>
<dbReference type="KEGG" id="slo:Shew_1215"/>
<dbReference type="eggNOG" id="COG0468">
    <property type="taxonomic scope" value="Bacteria"/>
</dbReference>
<dbReference type="HOGENOM" id="CLU_040469_3_2_6"/>
<dbReference type="OrthoDB" id="9776733at2"/>
<dbReference type="Proteomes" id="UP000001558">
    <property type="component" value="Chromosome"/>
</dbReference>
<dbReference type="GO" id="GO:0005829">
    <property type="term" value="C:cytosol"/>
    <property type="evidence" value="ECO:0007669"/>
    <property type="project" value="TreeGrafter"/>
</dbReference>
<dbReference type="GO" id="GO:0005524">
    <property type="term" value="F:ATP binding"/>
    <property type="evidence" value="ECO:0007669"/>
    <property type="project" value="UniProtKB-UniRule"/>
</dbReference>
<dbReference type="GO" id="GO:0016887">
    <property type="term" value="F:ATP hydrolysis activity"/>
    <property type="evidence" value="ECO:0007669"/>
    <property type="project" value="InterPro"/>
</dbReference>
<dbReference type="GO" id="GO:0140664">
    <property type="term" value="F:ATP-dependent DNA damage sensor activity"/>
    <property type="evidence" value="ECO:0007669"/>
    <property type="project" value="InterPro"/>
</dbReference>
<dbReference type="GO" id="GO:0003684">
    <property type="term" value="F:damaged DNA binding"/>
    <property type="evidence" value="ECO:0007669"/>
    <property type="project" value="UniProtKB-UniRule"/>
</dbReference>
<dbReference type="GO" id="GO:0003697">
    <property type="term" value="F:single-stranded DNA binding"/>
    <property type="evidence" value="ECO:0007669"/>
    <property type="project" value="UniProtKB-UniRule"/>
</dbReference>
<dbReference type="GO" id="GO:0006310">
    <property type="term" value="P:DNA recombination"/>
    <property type="evidence" value="ECO:0007669"/>
    <property type="project" value="UniProtKB-UniRule"/>
</dbReference>
<dbReference type="GO" id="GO:0006281">
    <property type="term" value="P:DNA repair"/>
    <property type="evidence" value="ECO:0007669"/>
    <property type="project" value="UniProtKB-UniRule"/>
</dbReference>
<dbReference type="GO" id="GO:0009432">
    <property type="term" value="P:SOS response"/>
    <property type="evidence" value="ECO:0007669"/>
    <property type="project" value="UniProtKB-UniRule"/>
</dbReference>
<dbReference type="CDD" id="cd00983">
    <property type="entry name" value="RecA"/>
    <property type="match status" value="1"/>
</dbReference>
<dbReference type="FunFam" id="3.40.50.300:FF:000087">
    <property type="entry name" value="Recombinase RecA"/>
    <property type="match status" value="1"/>
</dbReference>
<dbReference type="Gene3D" id="3.40.50.300">
    <property type="entry name" value="P-loop containing nucleotide triphosphate hydrolases"/>
    <property type="match status" value="1"/>
</dbReference>
<dbReference type="HAMAP" id="MF_00268">
    <property type="entry name" value="RecA"/>
    <property type="match status" value="1"/>
</dbReference>
<dbReference type="InterPro" id="IPR003593">
    <property type="entry name" value="AAA+_ATPase"/>
</dbReference>
<dbReference type="InterPro" id="IPR013765">
    <property type="entry name" value="DNA_recomb/repair_RecA"/>
</dbReference>
<dbReference type="InterPro" id="IPR020584">
    <property type="entry name" value="DNA_recomb/repair_RecA_CS"/>
</dbReference>
<dbReference type="InterPro" id="IPR027417">
    <property type="entry name" value="P-loop_NTPase"/>
</dbReference>
<dbReference type="InterPro" id="IPR049261">
    <property type="entry name" value="RecA-like_C"/>
</dbReference>
<dbReference type="InterPro" id="IPR049428">
    <property type="entry name" value="RecA-like_N"/>
</dbReference>
<dbReference type="InterPro" id="IPR020588">
    <property type="entry name" value="RecA_ATP-bd"/>
</dbReference>
<dbReference type="InterPro" id="IPR023400">
    <property type="entry name" value="RecA_C_sf"/>
</dbReference>
<dbReference type="InterPro" id="IPR020587">
    <property type="entry name" value="RecA_monomer-monomer_interface"/>
</dbReference>
<dbReference type="NCBIfam" id="TIGR02012">
    <property type="entry name" value="tigrfam_recA"/>
    <property type="match status" value="1"/>
</dbReference>
<dbReference type="PANTHER" id="PTHR45900:SF1">
    <property type="entry name" value="MITOCHONDRIAL DNA REPAIR PROTEIN RECA HOMOLOG-RELATED"/>
    <property type="match status" value="1"/>
</dbReference>
<dbReference type="PANTHER" id="PTHR45900">
    <property type="entry name" value="RECA"/>
    <property type="match status" value="1"/>
</dbReference>
<dbReference type="Pfam" id="PF00154">
    <property type="entry name" value="RecA"/>
    <property type="match status" value="1"/>
</dbReference>
<dbReference type="Pfam" id="PF21096">
    <property type="entry name" value="RecA_C"/>
    <property type="match status" value="1"/>
</dbReference>
<dbReference type="PRINTS" id="PR00142">
    <property type="entry name" value="RECA"/>
</dbReference>
<dbReference type="SMART" id="SM00382">
    <property type="entry name" value="AAA"/>
    <property type="match status" value="1"/>
</dbReference>
<dbReference type="SUPFAM" id="SSF52540">
    <property type="entry name" value="P-loop containing nucleoside triphosphate hydrolases"/>
    <property type="match status" value="1"/>
</dbReference>
<dbReference type="SUPFAM" id="SSF54752">
    <property type="entry name" value="RecA protein, C-terminal domain"/>
    <property type="match status" value="1"/>
</dbReference>
<dbReference type="PROSITE" id="PS00321">
    <property type="entry name" value="RECA_1"/>
    <property type="match status" value="1"/>
</dbReference>
<dbReference type="PROSITE" id="PS50162">
    <property type="entry name" value="RECA_2"/>
    <property type="match status" value="1"/>
</dbReference>
<dbReference type="PROSITE" id="PS50163">
    <property type="entry name" value="RECA_3"/>
    <property type="match status" value="1"/>
</dbReference>
<keyword id="KW-0067">ATP-binding</keyword>
<keyword id="KW-0963">Cytoplasm</keyword>
<keyword id="KW-0227">DNA damage</keyword>
<keyword id="KW-0233">DNA recombination</keyword>
<keyword id="KW-0234">DNA repair</keyword>
<keyword id="KW-0238">DNA-binding</keyword>
<keyword id="KW-0547">Nucleotide-binding</keyword>
<keyword id="KW-1185">Reference proteome</keyword>
<keyword id="KW-0742">SOS response</keyword>
<evidence type="ECO:0000255" key="1">
    <source>
        <dbReference type="HAMAP-Rule" id="MF_00268"/>
    </source>
</evidence>
<comment type="function">
    <text evidence="1">Can catalyze the hydrolysis of ATP in the presence of single-stranded DNA, the ATP-dependent uptake of single-stranded DNA by duplex DNA, and the ATP-dependent hybridization of homologous single-stranded DNAs. It interacts with LexA causing its activation and leading to its autocatalytic cleavage.</text>
</comment>
<comment type="subcellular location">
    <subcellularLocation>
        <location evidence="1">Cytoplasm</location>
    </subcellularLocation>
</comment>
<comment type="similarity">
    <text evidence="1">Belongs to the RecA family.</text>
</comment>